<name>ARGD_METMA</name>
<comment type="catalytic activity">
    <reaction evidence="1">
        <text>N(2)-acetyl-L-ornithine + 2-oxoglutarate = N-acetyl-L-glutamate 5-semialdehyde + L-glutamate</text>
        <dbReference type="Rhea" id="RHEA:18049"/>
        <dbReference type="ChEBI" id="CHEBI:16810"/>
        <dbReference type="ChEBI" id="CHEBI:29123"/>
        <dbReference type="ChEBI" id="CHEBI:29985"/>
        <dbReference type="ChEBI" id="CHEBI:57805"/>
        <dbReference type="EC" id="2.6.1.11"/>
    </reaction>
</comment>
<comment type="cofactor">
    <cofactor evidence="1">
        <name>pyridoxal 5'-phosphate</name>
        <dbReference type="ChEBI" id="CHEBI:597326"/>
    </cofactor>
    <text evidence="1">Binds 1 pyridoxal phosphate per subunit.</text>
</comment>
<comment type="pathway">
    <text evidence="1">Amino-acid biosynthesis; L-arginine biosynthesis; N(2)-acetyl-L-ornithine from L-glutamate: step 4/4.</text>
</comment>
<comment type="subunit">
    <text evidence="1">Homodimer.</text>
</comment>
<comment type="subcellular location">
    <subcellularLocation>
        <location evidence="1">Cytoplasm</location>
    </subcellularLocation>
</comment>
<comment type="miscellaneous">
    <text evidence="1">May also have succinyldiaminopimelate aminotransferase activity, thus carrying out the corresponding step in lysine biosynthesis.</text>
</comment>
<comment type="similarity">
    <text evidence="1">Belongs to the class-III pyridoxal-phosphate-dependent aminotransferase family. ArgD subfamily.</text>
</comment>
<evidence type="ECO:0000255" key="1">
    <source>
        <dbReference type="HAMAP-Rule" id="MF_01107"/>
    </source>
</evidence>
<proteinExistence type="inferred from homology"/>
<sequence length="395" mass="42359">MTDKIINSGNLEAGYDSVIDKDSKYVMQTYGRQPLVLSKGKGAVVQDIYGKEYIDCVAGIAVNNVGHCHPTVVKAIQAQAEKLIHVSNLYYTEIQAEFAETLASITGMECVFFCNSGAEAVEAAMKLARVATGKSAFVAAEHSFHGRTIGALSVTHKSMYRDPFMPPVSSKTSFVPYSDADAIRKAISEDTAAVVLEPIQGEGGVNVPDPGYLKEVREICDETGTLLIFDEVQTGFGRTGTWFCKEQFGVEPDIMSMAKAIGGGFPMGAIAARSGLSFGRGQHASTFGGGPLACAAALASIQAIKEEKLLERSKEMGAYFTKKLSGMARDDIVEVRGKGLMIGVEIKYPCGKFVDFAREHGVLVNCTSDSVLRLVPPLVITKEQIDSVVDVLEQA</sequence>
<organism>
    <name type="scientific">Methanosarcina mazei (strain ATCC BAA-159 / DSM 3647 / Goe1 / Go1 / JCM 11833 / OCM 88)</name>
    <name type="common">Methanosarcina frisia</name>
    <dbReference type="NCBI Taxonomy" id="192952"/>
    <lineage>
        <taxon>Archaea</taxon>
        <taxon>Methanobacteriati</taxon>
        <taxon>Methanobacteriota</taxon>
        <taxon>Stenosarchaea group</taxon>
        <taxon>Methanomicrobia</taxon>
        <taxon>Methanosarcinales</taxon>
        <taxon>Methanosarcinaceae</taxon>
        <taxon>Methanosarcina</taxon>
    </lineage>
</organism>
<keyword id="KW-0028">Amino-acid biosynthesis</keyword>
<keyword id="KW-0032">Aminotransferase</keyword>
<keyword id="KW-0055">Arginine biosynthesis</keyword>
<keyword id="KW-0963">Cytoplasm</keyword>
<keyword id="KW-0663">Pyridoxal phosphate</keyword>
<keyword id="KW-0808">Transferase</keyword>
<gene>
    <name evidence="1" type="primary">argD</name>
    <name type="ordered locus">MM_1406</name>
</gene>
<feature type="chain" id="PRO_0000112823" description="Acetylornithine aminotransferase">
    <location>
        <begin position="1"/>
        <end position="395"/>
    </location>
</feature>
<feature type="binding site" evidence="1">
    <location>
        <begin position="117"/>
        <end position="118"/>
    </location>
    <ligand>
        <name>pyridoxal 5'-phosphate</name>
        <dbReference type="ChEBI" id="CHEBI:597326"/>
    </ligand>
</feature>
<feature type="binding site" evidence="1">
    <location>
        <position position="144"/>
    </location>
    <ligand>
        <name>pyridoxal 5'-phosphate</name>
        <dbReference type="ChEBI" id="CHEBI:597326"/>
    </ligand>
</feature>
<feature type="binding site" evidence="1">
    <location>
        <position position="147"/>
    </location>
    <ligand>
        <name>N(2)-acetyl-L-ornithine</name>
        <dbReference type="ChEBI" id="CHEBI:57805"/>
    </ligand>
</feature>
<feature type="binding site" evidence="1">
    <location>
        <begin position="230"/>
        <end position="233"/>
    </location>
    <ligand>
        <name>pyridoxal 5'-phosphate</name>
        <dbReference type="ChEBI" id="CHEBI:597326"/>
    </ligand>
</feature>
<feature type="binding site" evidence="1">
    <location>
        <position position="285"/>
    </location>
    <ligand>
        <name>N(2)-acetyl-L-ornithine</name>
        <dbReference type="ChEBI" id="CHEBI:57805"/>
    </ligand>
</feature>
<feature type="binding site" evidence="1">
    <location>
        <position position="286"/>
    </location>
    <ligand>
        <name>pyridoxal 5'-phosphate</name>
        <dbReference type="ChEBI" id="CHEBI:597326"/>
    </ligand>
</feature>
<feature type="modified residue" description="N6-(pyridoxal phosphate)lysine" evidence="1">
    <location>
        <position position="259"/>
    </location>
</feature>
<accession>Q8PX16</accession>
<protein>
    <recommendedName>
        <fullName evidence="1">Acetylornithine aminotransferase</fullName>
        <shortName evidence="1">ACOAT</shortName>
        <ecNumber evidence="1">2.6.1.11</ecNumber>
    </recommendedName>
</protein>
<dbReference type="EC" id="2.6.1.11" evidence="1"/>
<dbReference type="EMBL" id="AE008384">
    <property type="protein sequence ID" value="AAM31102.1"/>
    <property type="molecule type" value="Genomic_DNA"/>
</dbReference>
<dbReference type="RefSeq" id="WP_011033352.1">
    <property type="nucleotide sequence ID" value="NC_003901.1"/>
</dbReference>
<dbReference type="SMR" id="Q8PX16"/>
<dbReference type="KEGG" id="mma:MM_1406"/>
<dbReference type="PATRIC" id="fig|192952.21.peg.1628"/>
<dbReference type="eggNOG" id="arCOG00914">
    <property type="taxonomic scope" value="Archaea"/>
</dbReference>
<dbReference type="HOGENOM" id="CLU_016922_10_1_2"/>
<dbReference type="UniPathway" id="UPA00068">
    <property type="reaction ID" value="UER00109"/>
</dbReference>
<dbReference type="Proteomes" id="UP000000595">
    <property type="component" value="Chromosome"/>
</dbReference>
<dbReference type="GO" id="GO:0005737">
    <property type="term" value="C:cytoplasm"/>
    <property type="evidence" value="ECO:0007669"/>
    <property type="project" value="UniProtKB-SubCell"/>
</dbReference>
<dbReference type="GO" id="GO:0042802">
    <property type="term" value="F:identical protein binding"/>
    <property type="evidence" value="ECO:0007669"/>
    <property type="project" value="TreeGrafter"/>
</dbReference>
<dbReference type="GO" id="GO:0003992">
    <property type="term" value="F:N2-acetyl-L-ornithine:2-oxoglutarate 5-aminotransferase activity"/>
    <property type="evidence" value="ECO:0007669"/>
    <property type="project" value="UniProtKB-UniRule"/>
</dbReference>
<dbReference type="GO" id="GO:0030170">
    <property type="term" value="F:pyridoxal phosphate binding"/>
    <property type="evidence" value="ECO:0007669"/>
    <property type="project" value="InterPro"/>
</dbReference>
<dbReference type="GO" id="GO:0006526">
    <property type="term" value="P:L-arginine biosynthetic process"/>
    <property type="evidence" value="ECO:0007669"/>
    <property type="project" value="UniProtKB-UniRule"/>
</dbReference>
<dbReference type="CDD" id="cd00610">
    <property type="entry name" value="OAT_like"/>
    <property type="match status" value="1"/>
</dbReference>
<dbReference type="FunFam" id="3.40.640.10:FF:000004">
    <property type="entry name" value="Acetylornithine aminotransferase"/>
    <property type="match status" value="1"/>
</dbReference>
<dbReference type="Gene3D" id="3.90.1150.10">
    <property type="entry name" value="Aspartate Aminotransferase, domain 1"/>
    <property type="match status" value="1"/>
</dbReference>
<dbReference type="Gene3D" id="3.40.640.10">
    <property type="entry name" value="Type I PLP-dependent aspartate aminotransferase-like (Major domain)"/>
    <property type="match status" value="1"/>
</dbReference>
<dbReference type="HAMAP" id="MF_01107">
    <property type="entry name" value="ArgD_aminotrans_3"/>
    <property type="match status" value="1"/>
</dbReference>
<dbReference type="InterPro" id="IPR004636">
    <property type="entry name" value="AcOrn/SuccOrn_fam"/>
</dbReference>
<dbReference type="InterPro" id="IPR005814">
    <property type="entry name" value="Aminotrans_3"/>
</dbReference>
<dbReference type="InterPro" id="IPR049704">
    <property type="entry name" value="Aminotrans_3_PPA_site"/>
</dbReference>
<dbReference type="InterPro" id="IPR050103">
    <property type="entry name" value="Class-III_PLP-dep_AT"/>
</dbReference>
<dbReference type="InterPro" id="IPR015424">
    <property type="entry name" value="PyrdxlP-dep_Trfase"/>
</dbReference>
<dbReference type="InterPro" id="IPR015421">
    <property type="entry name" value="PyrdxlP-dep_Trfase_major"/>
</dbReference>
<dbReference type="InterPro" id="IPR015422">
    <property type="entry name" value="PyrdxlP-dep_Trfase_small"/>
</dbReference>
<dbReference type="NCBIfam" id="TIGR00707">
    <property type="entry name" value="argD"/>
    <property type="match status" value="1"/>
</dbReference>
<dbReference type="NCBIfam" id="NF002325">
    <property type="entry name" value="PRK01278.1"/>
    <property type="match status" value="1"/>
</dbReference>
<dbReference type="NCBIfam" id="NF002874">
    <property type="entry name" value="PRK03244.1"/>
    <property type="match status" value="1"/>
</dbReference>
<dbReference type="PANTHER" id="PTHR11986:SF79">
    <property type="entry name" value="ACETYLORNITHINE AMINOTRANSFERASE, MITOCHONDRIAL"/>
    <property type="match status" value="1"/>
</dbReference>
<dbReference type="PANTHER" id="PTHR11986">
    <property type="entry name" value="AMINOTRANSFERASE CLASS III"/>
    <property type="match status" value="1"/>
</dbReference>
<dbReference type="Pfam" id="PF00202">
    <property type="entry name" value="Aminotran_3"/>
    <property type="match status" value="1"/>
</dbReference>
<dbReference type="PIRSF" id="PIRSF000521">
    <property type="entry name" value="Transaminase_4ab_Lys_Orn"/>
    <property type="match status" value="1"/>
</dbReference>
<dbReference type="SUPFAM" id="SSF53383">
    <property type="entry name" value="PLP-dependent transferases"/>
    <property type="match status" value="1"/>
</dbReference>
<dbReference type="PROSITE" id="PS00600">
    <property type="entry name" value="AA_TRANSFER_CLASS_3"/>
    <property type="match status" value="1"/>
</dbReference>
<reference key="1">
    <citation type="journal article" date="2002" name="J. Mol. Microbiol. Biotechnol.">
        <title>The genome of Methanosarcina mazei: evidence for lateral gene transfer between Bacteria and Archaea.</title>
        <authorList>
            <person name="Deppenmeier U."/>
            <person name="Johann A."/>
            <person name="Hartsch T."/>
            <person name="Merkl R."/>
            <person name="Schmitz R.A."/>
            <person name="Martinez-Arias R."/>
            <person name="Henne A."/>
            <person name="Wiezer A."/>
            <person name="Baeumer S."/>
            <person name="Jacobi C."/>
            <person name="Brueggemann H."/>
            <person name="Lienard T."/>
            <person name="Christmann A."/>
            <person name="Boemecke M."/>
            <person name="Steckel S."/>
            <person name="Bhattacharyya A."/>
            <person name="Lykidis A."/>
            <person name="Overbeek R."/>
            <person name="Klenk H.-P."/>
            <person name="Gunsalus R.P."/>
            <person name="Fritz H.-J."/>
            <person name="Gottschalk G."/>
        </authorList>
    </citation>
    <scope>NUCLEOTIDE SEQUENCE [LARGE SCALE GENOMIC DNA]</scope>
    <source>
        <strain>ATCC BAA-159 / DSM 3647 / Goe1 / Go1 / JCM 11833 / OCM 88</strain>
    </source>
</reference>